<sequence length="110" mass="11319">MEWGPGAGWSRGEAAGVDRGKAGLGLGGRPPPQPPRDERAQQLLDAVEQRQRQLLDTIAACEEMLRQLGRRRPEPAGGGNGSAKSGAPPQPSVSARGGLPKDAGDGASES</sequence>
<evidence type="ECO:0000255" key="1"/>
<evidence type="ECO:0000256" key="2">
    <source>
        <dbReference type="SAM" id="MobiDB-lite"/>
    </source>
</evidence>
<dbReference type="EMBL" id="AL606933">
    <property type="status" value="NOT_ANNOTATED_CDS"/>
    <property type="molecule type" value="Genomic_DNA"/>
</dbReference>
<dbReference type="CCDS" id="CCDS84792.1"/>
<dbReference type="RefSeq" id="NP_001334125.1">
    <property type="nucleotide sequence ID" value="NM_001347196.2"/>
</dbReference>
<dbReference type="SMR" id="B1ARW8"/>
<dbReference type="FunCoup" id="B1ARW8">
    <property type="interactions" value="9"/>
</dbReference>
<dbReference type="iPTMnet" id="B1ARW8"/>
<dbReference type="PhosphoSitePlus" id="B1ARW8"/>
<dbReference type="PaxDb" id="10090-ENSMUSP00000139121"/>
<dbReference type="PeptideAtlas" id="B1ARW8"/>
<dbReference type="Pumba" id="B1ARW8"/>
<dbReference type="Antibodypedia" id="54370">
    <property type="antibodies" value="51 antibodies from 11 providers"/>
</dbReference>
<dbReference type="Ensembl" id="ENSMUST00000106190.10">
    <property type="protein sequence ID" value="ENSMUSP00000101796.3"/>
    <property type="gene ID" value="ENSMUSG00000078570.11"/>
</dbReference>
<dbReference type="GeneID" id="68920"/>
<dbReference type="KEGG" id="mmu:68920"/>
<dbReference type="AGR" id="MGI:1916170"/>
<dbReference type="MGI" id="MGI:1916170">
    <property type="gene designation" value="1110065P20Rik"/>
</dbReference>
<dbReference type="VEuPathDB" id="HostDB:ENSMUSG00000078570"/>
<dbReference type="eggNOG" id="ENOG502TDYH">
    <property type="taxonomic scope" value="Eukaryota"/>
</dbReference>
<dbReference type="GeneTree" id="ENSGT00570000079623"/>
<dbReference type="HOGENOM" id="CLU_173436_0_0_1"/>
<dbReference type="InParanoid" id="B1ARW8"/>
<dbReference type="OrthoDB" id="9823503at2759"/>
<dbReference type="BioGRID-ORCS" id="68920">
    <property type="hits" value="2 hits in 75 CRISPR screens"/>
</dbReference>
<dbReference type="PRO" id="PR:B1ARW8"/>
<dbReference type="Proteomes" id="UP000000589">
    <property type="component" value="Chromosome 4"/>
</dbReference>
<dbReference type="RNAct" id="B1ARW8">
    <property type="molecule type" value="protein"/>
</dbReference>
<dbReference type="Bgee" id="ENSMUSG00000078570">
    <property type="expression patterns" value="Expressed in spermatocyte and 232 other cell types or tissues"/>
</dbReference>
<dbReference type="ExpressionAtlas" id="B1ARW8">
    <property type="expression patterns" value="baseline and differential"/>
</dbReference>
<dbReference type="InterPro" id="IPR031714">
    <property type="entry name" value="DUF4726"/>
</dbReference>
<dbReference type="PANTHER" id="PTHR41401">
    <property type="entry name" value="RGD1559909"/>
    <property type="match status" value="1"/>
</dbReference>
<dbReference type="PANTHER" id="PTHR41401:SF1">
    <property type="entry name" value="RIKEN CDNA 1110065P20 GENE"/>
    <property type="match status" value="1"/>
</dbReference>
<dbReference type="Pfam" id="PF15855">
    <property type="entry name" value="DUF4726"/>
    <property type="match status" value="1"/>
</dbReference>
<protein>
    <recommendedName>
        <fullName>Uncharacterized protein C1orf122 homolog</fullName>
    </recommendedName>
</protein>
<feature type="chain" id="PRO_0000385169" description="Uncharacterized protein C1orf122 homolog">
    <location>
        <begin position="1"/>
        <end position="110"/>
    </location>
</feature>
<feature type="region of interest" description="Disordered" evidence="2">
    <location>
        <begin position="1"/>
        <end position="41"/>
    </location>
</feature>
<feature type="region of interest" description="Disordered" evidence="2">
    <location>
        <begin position="65"/>
        <end position="110"/>
    </location>
</feature>
<feature type="coiled-coil region" evidence="1">
    <location>
        <begin position="38"/>
        <end position="68"/>
    </location>
</feature>
<keyword id="KW-0175">Coiled coil</keyword>
<keyword id="KW-1185">Reference proteome</keyword>
<organism>
    <name type="scientific">Mus musculus</name>
    <name type="common">Mouse</name>
    <dbReference type="NCBI Taxonomy" id="10090"/>
    <lineage>
        <taxon>Eukaryota</taxon>
        <taxon>Metazoa</taxon>
        <taxon>Chordata</taxon>
        <taxon>Craniata</taxon>
        <taxon>Vertebrata</taxon>
        <taxon>Euteleostomi</taxon>
        <taxon>Mammalia</taxon>
        <taxon>Eutheria</taxon>
        <taxon>Euarchontoglires</taxon>
        <taxon>Glires</taxon>
        <taxon>Rodentia</taxon>
        <taxon>Myomorpha</taxon>
        <taxon>Muroidea</taxon>
        <taxon>Muridae</taxon>
        <taxon>Murinae</taxon>
        <taxon>Mus</taxon>
        <taxon>Mus</taxon>
    </lineage>
</organism>
<proteinExistence type="predicted"/>
<accession>B1ARW8</accession>
<reference key="1">
    <citation type="submission" date="2009-01" db="EMBL/GenBank/DDBJ databases">
        <authorList>
            <consortium name="The mouse genome sequencing consortium"/>
        </authorList>
    </citation>
    <scope>NUCLEOTIDE SEQUENCE [LARGE SCALE GENOMIC DNA]</scope>
    <source>
        <strain>C57BL/6J</strain>
    </source>
</reference>
<name>CA122_MOUSE</name>